<comment type="function">
    <text evidence="2">GTP hydrolase that promotes the GTP-dependent binding of aminoacyl-tRNA to the A-site of ribosomes during protein biosynthesis.</text>
</comment>
<comment type="catalytic activity">
    <reaction evidence="2">
        <text>GTP + H2O = GDP + phosphate + H(+)</text>
        <dbReference type="Rhea" id="RHEA:19669"/>
        <dbReference type="ChEBI" id="CHEBI:15377"/>
        <dbReference type="ChEBI" id="CHEBI:15378"/>
        <dbReference type="ChEBI" id="CHEBI:37565"/>
        <dbReference type="ChEBI" id="CHEBI:43474"/>
        <dbReference type="ChEBI" id="CHEBI:58189"/>
        <dbReference type="EC" id="3.6.5.3"/>
    </reaction>
    <physiologicalReaction direction="left-to-right" evidence="2">
        <dbReference type="Rhea" id="RHEA:19670"/>
    </physiologicalReaction>
</comment>
<comment type="subunit">
    <text evidence="2">Monomer.</text>
</comment>
<comment type="subcellular location">
    <subcellularLocation>
        <location evidence="2">Cytoplasm</location>
    </subcellularLocation>
</comment>
<comment type="similarity">
    <text evidence="2">Belongs to the TRAFAC class translation factor GTPase superfamily. Classic translation factor GTPase family. EF-Tu/EF-1A subfamily.</text>
</comment>
<sequence>MAEKEHYERTKPHVNIGTIGHVDHGKTTLTAAITKVLAAKGLAKAEDYSDIDAAPEEKERGITINTAHVEYETEKRHYAHIDAPGHADYVKNMITGAAQMDGAILVVAATDGPMPQTREHILLARQVGVEYIVVFLNKTDLVDDDELVDLVEMEVRDLLSEYDFPGDDVPVVRGSALKALEGDPEQEQVVLHLLDVVDEYIPTPKRPTDKPFMMPVEDVFTITGRGTVASGRIDRGTVKIGDEVEIVGLKEDVIKSTVTGVEMFHKTLDLGEAGDNVGILLRGVSHDQIERGQVLAEPGSIQTHKQFKGEVYVMTKEEGGRHTPFFSNYRPQFYFHTTDVTGTIELPDGVEMVMPGDNVTFTVELQKPVALEKGLKFTIREGGHTVGAGVVSEVLD</sequence>
<evidence type="ECO:0000250" key="1"/>
<evidence type="ECO:0000255" key="2">
    <source>
        <dbReference type="HAMAP-Rule" id="MF_00118"/>
    </source>
</evidence>
<keyword id="KW-0963">Cytoplasm</keyword>
<keyword id="KW-0251">Elongation factor</keyword>
<keyword id="KW-0342">GTP-binding</keyword>
<keyword id="KW-0378">Hydrolase</keyword>
<keyword id="KW-0460">Magnesium</keyword>
<keyword id="KW-0479">Metal-binding</keyword>
<keyword id="KW-0547">Nucleotide-binding</keyword>
<keyword id="KW-0648">Protein biosynthesis</keyword>
<keyword id="KW-1185">Reference proteome</keyword>
<accession>B2GBC2</accession>
<protein>
    <recommendedName>
        <fullName evidence="2">Elongation factor Tu</fullName>
        <shortName evidence="2">EF-Tu</shortName>
        <ecNumber evidence="2">3.6.5.3</ecNumber>
    </recommendedName>
</protein>
<gene>
    <name evidence="2" type="primary">tuf</name>
    <name type="ordered locus">LAF_0618</name>
</gene>
<reference key="1">
    <citation type="journal article" date="2008" name="DNA Res.">
        <title>Comparative genome analysis of Lactobacillus reuteri and Lactobacillus fermentum reveal a genomic island for reuterin and cobalamin production.</title>
        <authorList>
            <person name="Morita H."/>
            <person name="Toh H."/>
            <person name="Fukuda S."/>
            <person name="Horikawa H."/>
            <person name="Oshima K."/>
            <person name="Suzuki T."/>
            <person name="Murakami M."/>
            <person name="Hisamatsu S."/>
            <person name="Kato Y."/>
            <person name="Takizawa T."/>
            <person name="Fukuoka H."/>
            <person name="Yoshimura T."/>
            <person name="Itoh K."/>
            <person name="O'Sullivan D.J."/>
            <person name="McKay L.L."/>
            <person name="Ohno H."/>
            <person name="Kikuchi J."/>
            <person name="Masaoka T."/>
            <person name="Hattori M."/>
        </authorList>
    </citation>
    <scope>NUCLEOTIDE SEQUENCE [LARGE SCALE GENOMIC DNA]</scope>
    <source>
        <strain>NBRC 3956 / LMG 18251</strain>
    </source>
</reference>
<feature type="chain" id="PRO_1000095070" description="Elongation factor Tu">
    <location>
        <begin position="1"/>
        <end position="396"/>
    </location>
</feature>
<feature type="domain" description="tr-type G">
    <location>
        <begin position="11"/>
        <end position="205"/>
    </location>
</feature>
<feature type="region of interest" description="G1" evidence="1">
    <location>
        <begin position="20"/>
        <end position="27"/>
    </location>
</feature>
<feature type="region of interest" description="G2" evidence="1">
    <location>
        <begin position="61"/>
        <end position="65"/>
    </location>
</feature>
<feature type="region of interest" description="G3" evidence="1">
    <location>
        <begin position="82"/>
        <end position="85"/>
    </location>
</feature>
<feature type="region of interest" description="G4" evidence="1">
    <location>
        <begin position="137"/>
        <end position="140"/>
    </location>
</feature>
<feature type="region of interest" description="G5" evidence="1">
    <location>
        <begin position="175"/>
        <end position="177"/>
    </location>
</feature>
<feature type="binding site" evidence="2">
    <location>
        <begin position="20"/>
        <end position="27"/>
    </location>
    <ligand>
        <name>GTP</name>
        <dbReference type="ChEBI" id="CHEBI:37565"/>
    </ligand>
</feature>
<feature type="binding site" evidence="2">
    <location>
        <position position="27"/>
    </location>
    <ligand>
        <name>Mg(2+)</name>
        <dbReference type="ChEBI" id="CHEBI:18420"/>
    </ligand>
</feature>
<feature type="binding site" evidence="2">
    <location>
        <begin position="82"/>
        <end position="86"/>
    </location>
    <ligand>
        <name>GTP</name>
        <dbReference type="ChEBI" id="CHEBI:37565"/>
    </ligand>
</feature>
<feature type="binding site" evidence="2">
    <location>
        <begin position="137"/>
        <end position="140"/>
    </location>
    <ligand>
        <name>GTP</name>
        <dbReference type="ChEBI" id="CHEBI:37565"/>
    </ligand>
</feature>
<name>EFTU_LIMF3</name>
<organism>
    <name type="scientific">Limosilactobacillus fermentum (strain NBRC 3956 / LMG 18251)</name>
    <name type="common">Lactobacillus fermentum</name>
    <dbReference type="NCBI Taxonomy" id="334390"/>
    <lineage>
        <taxon>Bacteria</taxon>
        <taxon>Bacillati</taxon>
        <taxon>Bacillota</taxon>
        <taxon>Bacilli</taxon>
        <taxon>Lactobacillales</taxon>
        <taxon>Lactobacillaceae</taxon>
        <taxon>Limosilactobacillus</taxon>
    </lineage>
</organism>
<proteinExistence type="inferred from homology"/>
<dbReference type="EC" id="3.6.5.3" evidence="2"/>
<dbReference type="EMBL" id="AP008937">
    <property type="protein sequence ID" value="BAG26954.1"/>
    <property type="molecule type" value="Genomic_DNA"/>
</dbReference>
<dbReference type="RefSeq" id="WP_012391019.1">
    <property type="nucleotide sequence ID" value="NC_010610.1"/>
</dbReference>
<dbReference type="SMR" id="B2GBC2"/>
<dbReference type="KEGG" id="lfe:LAF_0618"/>
<dbReference type="eggNOG" id="COG0050">
    <property type="taxonomic scope" value="Bacteria"/>
</dbReference>
<dbReference type="HOGENOM" id="CLU_007265_0_1_9"/>
<dbReference type="Proteomes" id="UP000001697">
    <property type="component" value="Chromosome"/>
</dbReference>
<dbReference type="GO" id="GO:0005829">
    <property type="term" value="C:cytosol"/>
    <property type="evidence" value="ECO:0007669"/>
    <property type="project" value="TreeGrafter"/>
</dbReference>
<dbReference type="GO" id="GO:0005525">
    <property type="term" value="F:GTP binding"/>
    <property type="evidence" value="ECO:0007669"/>
    <property type="project" value="UniProtKB-UniRule"/>
</dbReference>
<dbReference type="GO" id="GO:0003924">
    <property type="term" value="F:GTPase activity"/>
    <property type="evidence" value="ECO:0007669"/>
    <property type="project" value="InterPro"/>
</dbReference>
<dbReference type="GO" id="GO:0003746">
    <property type="term" value="F:translation elongation factor activity"/>
    <property type="evidence" value="ECO:0007669"/>
    <property type="project" value="UniProtKB-UniRule"/>
</dbReference>
<dbReference type="CDD" id="cd01884">
    <property type="entry name" value="EF_Tu"/>
    <property type="match status" value="1"/>
</dbReference>
<dbReference type="CDD" id="cd03697">
    <property type="entry name" value="EFTU_II"/>
    <property type="match status" value="1"/>
</dbReference>
<dbReference type="CDD" id="cd03707">
    <property type="entry name" value="EFTU_III"/>
    <property type="match status" value="1"/>
</dbReference>
<dbReference type="FunFam" id="2.40.30.10:FF:000001">
    <property type="entry name" value="Elongation factor Tu"/>
    <property type="match status" value="1"/>
</dbReference>
<dbReference type="FunFam" id="3.40.50.300:FF:000003">
    <property type="entry name" value="Elongation factor Tu"/>
    <property type="match status" value="1"/>
</dbReference>
<dbReference type="Gene3D" id="3.40.50.300">
    <property type="entry name" value="P-loop containing nucleotide triphosphate hydrolases"/>
    <property type="match status" value="1"/>
</dbReference>
<dbReference type="Gene3D" id="2.40.30.10">
    <property type="entry name" value="Translation factors"/>
    <property type="match status" value="2"/>
</dbReference>
<dbReference type="HAMAP" id="MF_00118_B">
    <property type="entry name" value="EF_Tu_B"/>
    <property type="match status" value="1"/>
</dbReference>
<dbReference type="InterPro" id="IPR041709">
    <property type="entry name" value="EF-Tu_GTP-bd"/>
</dbReference>
<dbReference type="InterPro" id="IPR050055">
    <property type="entry name" value="EF-Tu_GTPase"/>
</dbReference>
<dbReference type="InterPro" id="IPR004161">
    <property type="entry name" value="EFTu-like_2"/>
</dbReference>
<dbReference type="InterPro" id="IPR033720">
    <property type="entry name" value="EFTU_2"/>
</dbReference>
<dbReference type="InterPro" id="IPR031157">
    <property type="entry name" value="G_TR_CS"/>
</dbReference>
<dbReference type="InterPro" id="IPR027417">
    <property type="entry name" value="P-loop_NTPase"/>
</dbReference>
<dbReference type="InterPro" id="IPR005225">
    <property type="entry name" value="Small_GTP-bd"/>
</dbReference>
<dbReference type="InterPro" id="IPR000795">
    <property type="entry name" value="T_Tr_GTP-bd_dom"/>
</dbReference>
<dbReference type="InterPro" id="IPR009000">
    <property type="entry name" value="Transl_B-barrel_sf"/>
</dbReference>
<dbReference type="InterPro" id="IPR009001">
    <property type="entry name" value="Transl_elong_EF1A/Init_IF2_C"/>
</dbReference>
<dbReference type="InterPro" id="IPR004541">
    <property type="entry name" value="Transl_elong_EFTu/EF1A_bac/org"/>
</dbReference>
<dbReference type="InterPro" id="IPR004160">
    <property type="entry name" value="Transl_elong_EFTu/EF1A_C"/>
</dbReference>
<dbReference type="NCBIfam" id="TIGR00485">
    <property type="entry name" value="EF-Tu"/>
    <property type="match status" value="1"/>
</dbReference>
<dbReference type="NCBIfam" id="NF000766">
    <property type="entry name" value="PRK00049.1"/>
    <property type="match status" value="1"/>
</dbReference>
<dbReference type="NCBIfam" id="NF009372">
    <property type="entry name" value="PRK12735.1"/>
    <property type="match status" value="1"/>
</dbReference>
<dbReference type="NCBIfam" id="NF009373">
    <property type="entry name" value="PRK12736.1"/>
    <property type="match status" value="1"/>
</dbReference>
<dbReference type="NCBIfam" id="TIGR00231">
    <property type="entry name" value="small_GTP"/>
    <property type="match status" value="1"/>
</dbReference>
<dbReference type="PANTHER" id="PTHR43721:SF22">
    <property type="entry name" value="ELONGATION FACTOR TU, MITOCHONDRIAL"/>
    <property type="match status" value="1"/>
</dbReference>
<dbReference type="PANTHER" id="PTHR43721">
    <property type="entry name" value="ELONGATION FACTOR TU-RELATED"/>
    <property type="match status" value="1"/>
</dbReference>
<dbReference type="Pfam" id="PF00009">
    <property type="entry name" value="GTP_EFTU"/>
    <property type="match status" value="1"/>
</dbReference>
<dbReference type="Pfam" id="PF03144">
    <property type="entry name" value="GTP_EFTU_D2"/>
    <property type="match status" value="1"/>
</dbReference>
<dbReference type="Pfam" id="PF03143">
    <property type="entry name" value="GTP_EFTU_D3"/>
    <property type="match status" value="1"/>
</dbReference>
<dbReference type="PRINTS" id="PR00315">
    <property type="entry name" value="ELONGATNFCT"/>
</dbReference>
<dbReference type="SUPFAM" id="SSF50465">
    <property type="entry name" value="EF-Tu/eEF-1alpha/eIF2-gamma C-terminal domain"/>
    <property type="match status" value="1"/>
</dbReference>
<dbReference type="SUPFAM" id="SSF52540">
    <property type="entry name" value="P-loop containing nucleoside triphosphate hydrolases"/>
    <property type="match status" value="1"/>
</dbReference>
<dbReference type="SUPFAM" id="SSF50447">
    <property type="entry name" value="Translation proteins"/>
    <property type="match status" value="1"/>
</dbReference>
<dbReference type="PROSITE" id="PS00301">
    <property type="entry name" value="G_TR_1"/>
    <property type="match status" value="1"/>
</dbReference>
<dbReference type="PROSITE" id="PS51722">
    <property type="entry name" value="G_TR_2"/>
    <property type="match status" value="1"/>
</dbReference>